<evidence type="ECO:0000255" key="1">
    <source>
        <dbReference type="HAMAP-Rule" id="MF_00375"/>
    </source>
</evidence>
<feature type="chain" id="PRO_1000059978" description="Glutamate-1-semialdehyde 2,1-aminomutase">
    <location>
        <begin position="1"/>
        <end position="427"/>
    </location>
</feature>
<feature type="modified residue" description="N6-(pyridoxal phosphate)lysine" evidence="1">
    <location>
        <position position="265"/>
    </location>
</feature>
<keyword id="KW-0963">Cytoplasm</keyword>
<keyword id="KW-0413">Isomerase</keyword>
<keyword id="KW-0627">Porphyrin biosynthesis</keyword>
<keyword id="KW-0663">Pyridoxal phosphate</keyword>
<gene>
    <name evidence="1" type="primary">hemL</name>
    <name type="ordered locus">Bcep1808_0878</name>
</gene>
<sequence length="427" mass="44907">MSNNQILFERAQKTIPGGVNSPVRAFRSVGGTPRFVARAQGPYFWDADGKQYIDYIGSWGPMIVGHVHPEVLAAVQRVLADGFSFGAPTEAEIEIAEEICKLVPSIEQVRMVSSGTEATMSALRLARGFTGRSRIVKFEGCYHGHADSLLVKAGSGLLTFGNPTSAGVPADIAKHTTVLEYNNVAALEEAFGAFGDEIAAVIVEPVAGNMNLVRGTPEFLNALRALCTKHGAVLIFDEVMCGFRVALGGAQQHYGIAADLTCLGKVIGGGMPAAAFGGRRDIMAHLAPLGGVYQAGTLSGNPIAVAAGLKTLQLIQAPGFYDALTAQTKRLADGLAAEARAAGVPFAADSIGAMFGLYFAERVPASFAEVTKSDVERFNRFFHLMLDEGVYFAPSAYEAGFVSSTHDDAVIDATLAAARRAFAALAA</sequence>
<protein>
    <recommendedName>
        <fullName evidence="1">Glutamate-1-semialdehyde 2,1-aminomutase</fullName>
        <shortName evidence="1">GSA</shortName>
        <ecNumber evidence="1">5.4.3.8</ecNumber>
    </recommendedName>
    <alternativeName>
        <fullName evidence="1">Glutamate-1-semialdehyde aminotransferase</fullName>
        <shortName evidence="1">GSA-AT</shortName>
    </alternativeName>
</protein>
<organism>
    <name type="scientific">Burkholderia vietnamiensis (strain G4 / LMG 22486)</name>
    <name type="common">Burkholderia cepacia (strain R1808)</name>
    <dbReference type="NCBI Taxonomy" id="269482"/>
    <lineage>
        <taxon>Bacteria</taxon>
        <taxon>Pseudomonadati</taxon>
        <taxon>Pseudomonadota</taxon>
        <taxon>Betaproteobacteria</taxon>
        <taxon>Burkholderiales</taxon>
        <taxon>Burkholderiaceae</taxon>
        <taxon>Burkholderia</taxon>
        <taxon>Burkholderia cepacia complex</taxon>
    </lineage>
</organism>
<name>GSA_BURVG</name>
<dbReference type="EC" id="5.4.3.8" evidence="1"/>
<dbReference type="EMBL" id="CP000614">
    <property type="protein sequence ID" value="ABO53889.1"/>
    <property type="molecule type" value="Genomic_DNA"/>
</dbReference>
<dbReference type="SMR" id="A4JC86"/>
<dbReference type="KEGG" id="bvi:Bcep1808_0878"/>
<dbReference type="eggNOG" id="COG0001">
    <property type="taxonomic scope" value="Bacteria"/>
</dbReference>
<dbReference type="HOGENOM" id="CLU_016922_1_5_4"/>
<dbReference type="UniPathway" id="UPA00251">
    <property type="reaction ID" value="UER00317"/>
</dbReference>
<dbReference type="Proteomes" id="UP000002287">
    <property type="component" value="Chromosome 1"/>
</dbReference>
<dbReference type="GO" id="GO:0005737">
    <property type="term" value="C:cytoplasm"/>
    <property type="evidence" value="ECO:0007669"/>
    <property type="project" value="UniProtKB-SubCell"/>
</dbReference>
<dbReference type="GO" id="GO:0042286">
    <property type="term" value="F:glutamate-1-semialdehyde 2,1-aminomutase activity"/>
    <property type="evidence" value="ECO:0007669"/>
    <property type="project" value="UniProtKB-UniRule"/>
</dbReference>
<dbReference type="GO" id="GO:0030170">
    <property type="term" value="F:pyridoxal phosphate binding"/>
    <property type="evidence" value="ECO:0007669"/>
    <property type="project" value="InterPro"/>
</dbReference>
<dbReference type="GO" id="GO:0008483">
    <property type="term" value="F:transaminase activity"/>
    <property type="evidence" value="ECO:0007669"/>
    <property type="project" value="InterPro"/>
</dbReference>
<dbReference type="GO" id="GO:0006782">
    <property type="term" value="P:protoporphyrinogen IX biosynthetic process"/>
    <property type="evidence" value="ECO:0007669"/>
    <property type="project" value="UniProtKB-UniRule"/>
</dbReference>
<dbReference type="CDD" id="cd00610">
    <property type="entry name" value="OAT_like"/>
    <property type="match status" value="1"/>
</dbReference>
<dbReference type="FunFam" id="3.40.640.10:FF:000021">
    <property type="entry name" value="Glutamate-1-semialdehyde 2,1-aminomutase"/>
    <property type="match status" value="1"/>
</dbReference>
<dbReference type="Gene3D" id="3.90.1150.10">
    <property type="entry name" value="Aspartate Aminotransferase, domain 1"/>
    <property type="match status" value="1"/>
</dbReference>
<dbReference type="Gene3D" id="3.40.640.10">
    <property type="entry name" value="Type I PLP-dependent aspartate aminotransferase-like (Major domain)"/>
    <property type="match status" value="1"/>
</dbReference>
<dbReference type="HAMAP" id="MF_00375">
    <property type="entry name" value="HemL_aminotrans_3"/>
    <property type="match status" value="1"/>
</dbReference>
<dbReference type="InterPro" id="IPR004639">
    <property type="entry name" value="4pyrrol_synth_GluAld_NH2Trfase"/>
</dbReference>
<dbReference type="InterPro" id="IPR005814">
    <property type="entry name" value="Aminotrans_3"/>
</dbReference>
<dbReference type="InterPro" id="IPR049704">
    <property type="entry name" value="Aminotrans_3_PPA_site"/>
</dbReference>
<dbReference type="InterPro" id="IPR015424">
    <property type="entry name" value="PyrdxlP-dep_Trfase"/>
</dbReference>
<dbReference type="InterPro" id="IPR015421">
    <property type="entry name" value="PyrdxlP-dep_Trfase_major"/>
</dbReference>
<dbReference type="InterPro" id="IPR015422">
    <property type="entry name" value="PyrdxlP-dep_Trfase_small"/>
</dbReference>
<dbReference type="NCBIfam" id="TIGR00713">
    <property type="entry name" value="hemL"/>
    <property type="match status" value="1"/>
</dbReference>
<dbReference type="NCBIfam" id="NF000818">
    <property type="entry name" value="PRK00062.1"/>
    <property type="match status" value="1"/>
</dbReference>
<dbReference type="PANTHER" id="PTHR43713">
    <property type="entry name" value="GLUTAMATE-1-SEMIALDEHYDE 2,1-AMINOMUTASE"/>
    <property type="match status" value="1"/>
</dbReference>
<dbReference type="PANTHER" id="PTHR43713:SF3">
    <property type="entry name" value="GLUTAMATE-1-SEMIALDEHYDE 2,1-AMINOMUTASE 1, CHLOROPLASTIC-RELATED"/>
    <property type="match status" value="1"/>
</dbReference>
<dbReference type="Pfam" id="PF00202">
    <property type="entry name" value="Aminotran_3"/>
    <property type="match status" value="1"/>
</dbReference>
<dbReference type="SUPFAM" id="SSF53383">
    <property type="entry name" value="PLP-dependent transferases"/>
    <property type="match status" value="1"/>
</dbReference>
<dbReference type="PROSITE" id="PS00600">
    <property type="entry name" value="AA_TRANSFER_CLASS_3"/>
    <property type="match status" value="1"/>
</dbReference>
<reference key="1">
    <citation type="submission" date="2007-03" db="EMBL/GenBank/DDBJ databases">
        <title>Complete sequence of chromosome 1 of Burkholderia vietnamiensis G4.</title>
        <authorList>
            <consortium name="US DOE Joint Genome Institute"/>
            <person name="Copeland A."/>
            <person name="Lucas S."/>
            <person name="Lapidus A."/>
            <person name="Barry K."/>
            <person name="Detter J.C."/>
            <person name="Glavina del Rio T."/>
            <person name="Hammon N."/>
            <person name="Israni S."/>
            <person name="Dalin E."/>
            <person name="Tice H."/>
            <person name="Pitluck S."/>
            <person name="Chain P."/>
            <person name="Malfatti S."/>
            <person name="Shin M."/>
            <person name="Vergez L."/>
            <person name="Schmutz J."/>
            <person name="Larimer F."/>
            <person name="Land M."/>
            <person name="Hauser L."/>
            <person name="Kyrpides N."/>
            <person name="Tiedje J."/>
            <person name="Richardson P."/>
        </authorList>
    </citation>
    <scope>NUCLEOTIDE SEQUENCE [LARGE SCALE GENOMIC DNA]</scope>
    <source>
        <strain>G4 / LMG 22486</strain>
    </source>
</reference>
<accession>A4JC86</accession>
<comment type="catalytic activity">
    <reaction evidence="1">
        <text>(S)-4-amino-5-oxopentanoate = 5-aminolevulinate</text>
        <dbReference type="Rhea" id="RHEA:14265"/>
        <dbReference type="ChEBI" id="CHEBI:57501"/>
        <dbReference type="ChEBI" id="CHEBI:356416"/>
        <dbReference type="EC" id="5.4.3.8"/>
    </reaction>
</comment>
<comment type="cofactor">
    <cofactor evidence="1">
        <name>pyridoxal 5'-phosphate</name>
        <dbReference type="ChEBI" id="CHEBI:597326"/>
    </cofactor>
</comment>
<comment type="pathway">
    <text evidence="1">Porphyrin-containing compound metabolism; protoporphyrin-IX biosynthesis; 5-aminolevulinate from L-glutamyl-tRNA(Glu): step 2/2.</text>
</comment>
<comment type="subunit">
    <text evidence="1">Homodimer.</text>
</comment>
<comment type="subcellular location">
    <subcellularLocation>
        <location evidence="1">Cytoplasm</location>
    </subcellularLocation>
</comment>
<comment type="similarity">
    <text evidence="1">Belongs to the class-III pyridoxal-phosphate-dependent aminotransferase family. HemL subfamily.</text>
</comment>
<proteinExistence type="inferred from homology"/>